<accession>Q5PL21</accession>
<evidence type="ECO:0000255" key="1">
    <source>
        <dbReference type="HAMAP-Rule" id="MF_01412"/>
    </source>
</evidence>
<evidence type="ECO:0000255" key="2">
    <source>
        <dbReference type="PROSITE-ProRule" id="PRU00543"/>
    </source>
</evidence>
<dbReference type="EMBL" id="CP000026">
    <property type="protein sequence ID" value="AAV79139.1"/>
    <property type="molecule type" value="Genomic_DNA"/>
</dbReference>
<dbReference type="RefSeq" id="WP_000398134.1">
    <property type="nucleotide sequence ID" value="NC_006511.1"/>
</dbReference>
<dbReference type="SMR" id="Q5PL21"/>
<dbReference type="KEGG" id="spt:SPA3323"/>
<dbReference type="HOGENOM" id="CLU_005126_9_3_6"/>
<dbReference type="Proteomes" id="UP000008185">
    <property type="component" value="Chromosome"/>
</dbReference>
<dbReference type="GO" id="GO:0005886">
    <property type="term" value="C:plasma membrane"/>
    <property type="evidence" value="ECO:0007669"/>
    <property type="project" value="UniProtKB-SubCell"/>
</dbReference>
<dbReference type="GO" id="GO:0015503">
    <property type="term" value="F:glutathione-regulated potassium exporter activity"/>
    <property type="evidence" value="ECO:0007669"/>
    <property type="project" value="UniProtKB-UniRule"/>
</dbReference>
<dbReference type="GO" id="GO:1902600">
    <property type="term" value="P:proton transmembrane transport"/>
    <property type="evidence" value="ECO:0007669"/>
    <property type="project" value="InterPro"/>
</dbReference>
<dbReference type="FunFam" id="1.20.1530.20:FF:000001">
    <property type="entry name" value="Glutathione-regulated potassium-efflux system protein KefB"/>
    <property type="match status" value="1"/>
</dbReference>
<dbReference type="FunFam" id="3.40.50.720:FF:000036">
    <property type="entry name" value="Glutathione-regulated potassium-efflux system protein KefB"/>
    <property type="match status" value="1"/>
</dbReference>
<dbReference type="Gene3D" id="1.20.1530.20">
    <property type="match status" value="1"/>
</dbReference>
<dbReference type="Gene3D" id="3.40.50.720">
    <property type="entry name" value="NAD(P)-binding Rossmann-like Domain"/>
    <property type="match status" value="1"/>
</dbReference>
<dbReference type="HAMAP" id="MF_01412">
    <property type="entry name" value="K_H_efflux_KefB"/>
    <property type="match status" value="1"/>
</dbReference>
<dbReference type="InterPro" id="IPR006153">
    <property type="entry name" value="Cation/H_exchanger_TM"/>
</dbReference>
<dbReference type="InterPro" id="IPR004771">
    <property type="entry name" value="K/H_exchanger"/>
</dbReference>
<dbReference type="InterPro" id="IPR020884">
    <property type="entry name" value="K_H_efflux_KefB"/>
</dbReference>
<dbReference type="InterPro" id="IPR006036">
    <property type="entry name" value="K_uptake_TrkA"/>
</dbReference>
<dbReference type="InterPro" id="IPR038770">
    <property type="entry name" value="Na+/solute_symporter_sf"/>
</dbReference>
<dbReference type="InterPro" id="IPR036291">
    <property type="entry name" value="NAD(P)-bd_dom_sf"/>
</dbReference>
<dbReference type="InterPro" id="IPR003148">
    <property type="entry name" value="RCK_N"/>
</dbReference>
<dbReference type="NCBIfam" id="TIGR00932">
    <property type="entry name" value="2a37"/>
    <property type="match status" value="1"/>
</dbReference>
<dbReference type="NCBIfam" id="NF002973">
    <property type="entry name" value="PRK03659.1"/>
    <property type="match status" value="1"/>
</dbReference>
<dbReference type="PANTHER" id="PTHR46157">
    <property type="entry name" value="K(+) EFFLUX ANTIPORTER 3, CHLOROPLASTIC"/>
    <property type="match status" value="1"/>
</dbReference>
<dbReference type="PANTHER" id="PTHR46157:SF4">
    <property type="entry name" value="K(+) EFFLUX ANTIPORTER 3, CHLOROPLASTIC"/>
    <property type="match status" value="1"/>
</dbReference>
<dbReference type="Pfam" id="PF00999">
    <property type="entry name" value="Na_H_Exchanger"/>
    <property type="match status" value="1"/>
</dbReference>
<dbReference type="Pfam" id="PF02254">
    <property type="entry name" value="TrkA_N"/>
    <property type="match status" value="1"/>
</dbReference>
<dbReference type="PRINTS" id="PR00335">
    <property type="entry name" value="KUPTAKETRKA"/>
</dbReference>
<dbReference type="SUPFAM" id="SSF51735">
    <property type="entry name" value="NAD(P)-binding Rossmann-fold domains"/>
    <property type="match status" value="1"/>
</dbReference>
<dbReference type="PROSITE" id="PS51201">
    <property type="entry name" value="RCK_N"/>
    <property type="match status" value="1"/>
</dbReference>
<organism>
    <name type="scientific">Salmonella paratyphi A (strain ATCC 9150 / SARB42)</name>
    <dbReference type="NCBI Taxonomy" id="295319"/>
    <lineage>
        <taxon>Bacteria</taxon>
        <taxon>Pseudomonadati</taxon>
        <taxon>Pseudomonadota</taxon>
        <taxon>Gammaproteobacteria</taxon>
        <taxon>Enterobacterales</taxon>
        <taxon>Enterobacteriaceae</taxon>
        <taxon>Salmonella</taxon>
    </lineage>
</organism>
<feature type="chain" id="PRO_0000196600" description="Glutathione-regulated potassium-efflux system protein KefB">
    <location>
        <begin position="1"/>
        <end position="601"/>
    </location>
</feature>
<feature type="transmembrane region" description="Helical" evidence="1">
    <location>
        <begin position="4"/>
        <end position="24"/>
    </location>
</feature>
<feature type="transmembrane region" description="Helical" evidence="1">
    <location>
        <begin position="29"/>
        <end position="49"/>
    </location>
</feature>
<feature type="transmembrane region" description="Helical" evidence="1">
    <location>
        <begin position="55"/>
        <end position="75"/>
    </location>
</feature>
<feature type="transmembrane region" description="Helical" evidence="1">
    <location>
        <begin position="87"/>
        <end position="107"/>
    </location>
</feature>
<feature type="transmembrane region" description="Helical" evidence="1">
    <location>
        <begin position="111"/>
        <end position="131"/>
    </location>
</feature>
<feature type="transmembrane region" description="Helical" evidence="1">
    <location>
        <begin position="152"/>
        <end position="172"/>
    </location>
</feature>
<feature type="transmembrane region" description="Helical" evidence="1">
    <location>
        <begin position="177"/>
        <end position="197"/>
    </location>
</feature>
<feature type="transmembrane region" description="Helical" evidence="1">
    <location>
        <begin position="207"/>
        <end position="227"/>
    </location>
</feature>
<feature type="transmembrane region" description="Helical" evidence="1">
    <location>
        <begin position="230"/>
        <end position="250"/>
    </location>
</feature>
<feature type="transmembrane region" description="Helical" evidence="1">
    <location>
        <begin position="262"/>
        <end position="282"/>
    </location>
</feature>
<feature type="transmembrane region" description="Helical" evidence="1">
    <location>
        <begin position="284"/>
        <end position="304"/>
    </location>
</feature>
<feature type="transmembrane region" description="Helical" evidence="1">
    <location>
        <begin position="324"/>
        <end position="344"/>
    </location>
</feature>
<feature type="transmembrane region" description="Helical" evidence="1">
    <location>
        <begin position="356"/>
        <end position="376"/>
    </location>
</feature>
<feature type="domain" description="RCK N-terminal" evidence="2">
    <location>
        <begin position="400"/>
        <end position="519"/>
    </location>
</feature>
<gene>
    <name evidence="1" type="primary">kefB</name>
    <name type="ordered locus">SPA3323</name>
</gene>
<protein>
    <recommendedName>
        <fullName evidence="1">Glutathione-regulated potassium-efflux system protein KefB</fullName>
    </recommendedName>
    <alternativeName>
        <fullName evidence="1">K(+)/H(+) antiporter</fullName>
    </alternativeName>
</protein>
<comment type="function">
    <text evidence="1">Pore-forming subunit of a potassium efflux system that confers protection against electrophiles. Catalyzes K(+)/H(+) antiport.</text>
</comment>
<comment type="subunit">
    <text evidence="1">Interacts with the regulatory subunit KefG.</text>
</comment>
<comment type="subcellular location">
    <subcellularLocation>
        <location evidence="1">Cell inner membrane</location>
        <topology evidence="1">Multi-pass membrane protein</topology>
    </subcellularLocation>
</comment>
<comment type="similarity">
    <text evidence="1">Belongs to the monovalent cation:proton antiporter 2 (CPA2) transporter (TC 2.A.37) family. KefB subfamily.</text>
</comment>
<reference key="1">
    <citation type="journal article" date="2004" name="Nat. Genet.">
        <title>Comparison of genome degradation in Paratyphi A and Typhi, human-restricted serovars of Salmonella enterica that cause typhoid.</title>
        <authorList>
            <person name="McClelland M."/>
            <person name="Sanderson K.E."/>
            <person name="Clifton S.W."/>
            <person name="Latreille P."/>
            <person name="Porwollik S."/>
            <person name="Sabo A."/>
            <person name="Meyer R."/>
            <person name="Bieri T."/>
            <person name="Ozersky P."/>
            <person name="McLellan M."/>
            <person name="Harkins C.R."/>
            <person name="Wang C."/>
            <person name="Nguyen C."/>
            <person name="Berghoff A."/>
            <person name="Elliott G."/>
            <person name="Kohlberg S."/>
            <person name="Strong C."/>
            <person name="Du F."/>
            <person name="Carter J."/>
            <person name="Kremizki C."/>
            <person name="Layman D."/>
            <person name="Leonard S."/>
            <person name="Sun H."/>
            <person name="Fulton L."/>
            <person name="Nash W."/>
            <person name="Miner T."/>
            <person name="Minx P."/>
            <person name="Delehaunty K."/>
            <person name="Fronick C."/>
            <person name="Magrini V."/>
            <person name="Nhan M."/>
            <person name="Warren W."/>
            <person name="Florea L."/>
            <person name="Spieth J."/>
            <person name="Wilson R.K."/>
        </authorList>
    </citation>
    <scope>NUCLEOTIDE SEQUENCE [LARGE SCALE GENOMIC DNA]</scope>
    <source>
        <strain>ATCC 9150 / SARB42</strain>
    </source>
</reference>
<name>KEFB_SALPA</name>
<keyword id="KW-0050">Antiport</keyword>
<keyword id="KW-0997">Cell inner membrane</keyword>
<keyword id="KW-1003">Cell membrane</keyword>
<keyword id="KW-0406">Ion transport</keyword>
<keyword id="KW-0472">Membrane</keyword>
<keyword id="KW-0630">Potassium</keyword>
<keyword id="KW-0633">Potassium transport</keyword>
<keyword id="KW-0812">Transmembrane</keyword>
<keyword id="KW-1133">Transmembrane helix</keyword>
<keyword id="KW-0813">Transport</keyword>
<sequence length="601" mass="66330">MEGADLLTAGVLFLFAAVAAVPLAARLGIGAVLGYLLAGIAIGPWGLGFISDVDEILHFSELGVVFLMFIIGLELNPSRLWQLRRSIFGVGAAQVLLSAAVLAGLLMLADFLWQAAVVGGIGLAMSSTAMALQLMREKGMNRSESGQLGFSVLLFQDLAVIPALALVPLLAGSADEHFDWFKVAMKVLAFAVMLIGGRYLLRPVFRFIAASGVREVFTAATLLLVLSAALFMDALGLSMALGTFIAGVLLAESEYRHELENAIDPFKGLLLGLFFISVGMSLNLGVLYTHLLWVAASVVILVVIKMLTLYLLARLYGIRSSERMQFASVLSQGGEFAFVLFSTASSQRLFQGDQMALLLVTVTLSMMTTPLLMKGIDKWLSRRLNGPEENDEKPWVEDDKPQVIVVGFGRFGQVIARLLMANKMRITVLERDIGAVNLMRKYGYKVYYGDATQVELLRSAGAEAAESIVITCNEPEDTMKLVALCQQHFPHLHILARARGRVEAHELLQAGVTQFSRETFSSALELGRKTLVSLGMHPHQAQRAQLHFRRLDMRMLRGLIPEHSDMVQISRAREARRELEEIFQREMQQERRQLDGWDEFE</sequence>
<proteinExistence type="inferred from homology"/>